<name>Y343_ACTSZ</name>
<comment type="similarity">
    <text evidence="1">Belongs to the UPF0225 family.</text>
</comment>
<proteinExistence type="inferred from homology"/>
<accession>A6VL74</accession>
<organism>
    <name type="scientific">Actinobacillus succinogenes (strain ATCC 55618 / DSM 22257 / CCUG 43843 / 130Z)</name>
    <dbReference type="NCBI Taxonomy" id="339671"/>
    <lineage>
        <taxon>Bacteria</taxon>
        <taxon>Pseudomonadati</taxon>
        <taxon>Pseudomonadota</taxon>
        <taxon>Gammaproteobacteria</taxon>
        <taxon>Pasteurellales</taxon>
        <taxon>Pasteurellaceae</taxon>
        <taxon>Actinobacillus</taxon>
    </lineage>
</organism>
<dbReference type="EMBL" id="CP000746">
    <property type="protein sequence ID" value="ABR73721.1"/>
    <property type="molecule type" value="Genomic_DNA"/>
</dbReference>
<dbReference type="RefSeq" id="WP_011978996.1">
    <property type="nucleotide sequence ID" value="NC_009655.1"/>
</dbReference>
<dbReference type="SMR" id="A6VL74"/>
<dbReference type="STRING" id="339671.Asuc_0343"/>
<dbReference type="KEGG" id="asu:Asuc_0343"/>
<dbReference type="eggNOG" id="COG3012">
    <property type="taxonomic scope" value="Bacteria"/>
</dbReference>
<dbReference type="HOGENOM" id="CLU_099590_0_1_6"/>
<dbReference type="OrthoDB" id="21421at2"/>
<dbReference type="Proteomes" id="UP000001114">
    <property type="component" value="Chromosome"/>
</dbReference>
<dbReference type="Gene3D" id="3.10.450.50">
    <property type="match status" value="1"/>
</dbReference>
<dbReference type="HAMAP" id="MF_00612">
    <property type="entry name" value="UPF0225"/>
    <property type="match status" value="1"/>
</dbReference>
<dbReference type="InterPro" id="IPR032710">
    <property type="entry name" value="NTF2-like_dom_sf"/>
</dbReference>
<dbReference type="InterPro" id="IPR004027">
    <property type="entry name" value="SEC_C_motif"/>
</dbReference>
<dbReference type="InterPro" id="IPR023006">
    <property type="entry name" value="UPF0225"/>
</dbReference>
<dbReference type="InterPro" id="IPR048469">
    <property type="entry name" value="YchJ-like_M"/>
</dbReference>
<dbReference type="NCBIfam" id="NF001213">
    <property type="entry name" value="PRK00183.1"/>
    <property type="match status" value="1"/>
</dbReference>
<dbReference type="NCBIfam" id="NF002449">
    <property type="entry name" value="PRK01617.1"/>
    <property type="match status" value="1"/>
</dbReference>
<dbReference type="NCBIfam" id="NF002486">
    <property type="entry name" value="PRK01752.1"/>
    <property type="match status" value="1"/>
</dbReference>
<dbReference type="PANTHER" id="PTHR33747:SF1">
    <property type="entry name" value="ADENYLATE CYCLASE-ASSOCIATED CAP C-TERMINAL DOMAIN-CONTAINING PROTEIN"/>
    <property type="match status" value="1"/>
</dbReference>
<dbReference type="PANTHER" id="PTHR33747">
    <property type="entry name" value="UPF0225 PROTEIN SCO1677"/>
    <property type="match status" value="1"/>
</dbReference>
<dbReference type="Pfam" id="PF02810">
    <property type="entry name" value="SEC-C"/>
    <property type="match status" value="2"/>
</dbReference>
<dbReference type="Pfam" id="PF17775">
    <property type="entry name" value="YchJ_M-like"/>
    <property type="match status" value="1"/>
</dbReference>
<dbReference type="SUPFAM" id="SSF54427">
    <property type="entry name" value="NTF2-like"/>
    <property type="match status" value="1"/>
</dbReference>
<dbReference type="SUPFAM" id="SSF103642">
    <property type="entry name" value="Sec-C motif"/>
    <property type="match status" value="1"/>
</dbReference>
<keyword id="KW-1185">Reference proteome</keyword>
<protein>
    <recommendedName>
        <fullName evidence="1">UPF0225 protein Asuc_0343</fullName>
    </recommendedName>
</protein>
<reference key="1">
    <citation type="journal article" date="2010" name="BMC Genomics">
        <title>A genomic perspective on the potential of Actinobacillus succinogenes for industrial succinate production.</title>
        <authorList>
            <person name="McKinlay J.B."/>
            <person name="Laivenieks M."/>
            <person name="Schindler B.D."/>
            <person name="McKinlay A.A."/>
            <person name="Siddaramappa S."/>
            <person name="Challacombe J.F."/>
            <person name="Lowry S.R."/>
            <person name="Clum A."/>
            <person name="Lapidus A.L."/>
            <person name="Burkhart K.B."/>
            <person name="Harkins V."/>
            <person name="Vieille C."/>
        </authorList>
    </citation>
    <scope>NUCLEOTIDE SEQUENCE [LARGE SCALE GENOMIC DNA]</scope>
    <source>
        <strain>ATCC 55618 / DSM 22257 / CCUG 43843 / 130Z</strain>
    </source>
</reference>
<evidence type="ECO:0000255" key="1">
    <source>
        <dbReference type="HAMAP-Rule" id="MF_00612"/>
    </source>
</evidence>
<gene>
    <name type="ordered locus">Asuc_0343</name>
</gene>
<feature type="chain" id="PRO_1000130378" description="UPF0225 protein Asuc_0343">
    <location>
        <begin position="1"/>
        <end position="154"/>
    </location>
</feature>
<sequence length="154" mass="17588">MTALCPCQSGLDYADCCEPFHSFKTCPQTAEQLMRSRYCAYVLKNIDYVIQTTVPGQQAQLDKTLLQDWANDTSWTGLQIVRHQPAVSKIHSKVEFNAFFKVNDEKQTHNENSLFVKIDGRWYFVDSTVELPNQKHPCLCGSGKKFKHCCGAYL</sequence>